<feature type="chain" id="PRO_0000284345" description="Endoribonuclease YbeY">
    <location>
        <begin position="1"/>
        <end position="183"/>
    </location>
</feature>
<feature type="binding site" evidence="1">
    <location>
        <position position="142"/>
    </location>
    <ligand>
        <name>Zn(2+)</name>
        <dbReference type="ChEBI" id="CHEBI:29105"/>
        <note>catalytic</note>
    </ligand>
</feature>
<feature type="binding site" evidence="1">
    <location>
        <position position="146"/>
    </location>
    <ligand>
        <name>Zn(2+)</name>
        <dbReference type="ChEBI" id="CHEBI:29105"/>
        <note>catalytic</note>
    </ligand>
</feature>
<feature type="binding site" evidence="1">
    <location>
        <position position="152"/>
    </location>
    <ligand>
        <name>Zn(2+)</name>
        <dbReference type="ChEBI" id="CHEBI:29105"/>
        <note>catalytic</note>
    </ligand>
</feature>
<organism>
    <name type="scientific">Trichodesmium erythraeum (strain IMS101)</name>
    <dbReference type="NCBI Taxonomy" id="203124"/>
    <lineage>
        <taxon>Bacteria</taxon>
        <taxon>Bacillati</taxon>
        <taxon>Cyanobacteriota</taxon>
        <taxon>Cyanophyceae</taxon>
        <taxon>Oscillatoriophycideae</taxon>
        <taxon>Oscillatoriales</taxon>
        <taxon>Microcoleaceae</taxon>
        <taxon>Trichodesmium</taxon>
    </lineage>
</organism>
<gene>
    <name evidence="1" type="primary">ybeY</name>
    <name type="ordered locus">Tery_5027</name>
</gene>
<accession>Q10UY5</accession>
<name>YBEY_TRIEI</name>
<evidence type="ECO:0000255" key="1">
    <source>
        <dbReference type="HAMAP-Rule" id="MF_00009"/>
    </source>
</evidence>
<comment type="function">
    <text evidence="1">Single strand-specific metallo-endoribonuclease involved in late-stage 70S ribosome quality control and in maturation of the 3' terminus of the 16S rRNA.</text>
</comment>
<comment type="cofactor">
    <cofactor evidence="1">
        <name>Zn(2+)</name>
        <dbReference type="ChEBI" id="CHEBI:29105"/>
    </cofactor>
    <text evidence="1">Binds 1 zinc ion.</text>
</comment>
<comment type="subcellular location">
    <subcellularLocation>
        <location evidence="1">Cytoplasm</location>
    </subcellularLocation>
</comment>
<comment type="similarity">
    <text evidence="1">Belongs to the endoribonuclease YbeY family.</text>
</comment>
<proteinExistence type="inferred from homology"/>
<protein>
    <recommendedName>
        <fullName evidence="1">Endoribonuclease YbeY</fullName>
        <ecNumber evidence="1">3.1.-.-</ecNumber>
    </recommendedName>
</protein>
<sequence length="183" mass="21797">MYLKVNIQDYFWSSSSEVKKLKLQEDRDQKCPIFFYRWEYWFQKWLEILQPNIPPAQNYELSLRLTDDSEIQILNNKYRYQNQPTDVLAFANLEVDIPQPEVVDSDLQLYLGDIVISVETAFQQAKQQGHPLITELTWLAAHGFLHLLGWDHLDQESWQKMVKQQLFLLNAVGEVYWITDNSR</sequence>
<reference key="1">
    <citation type="journal article" date="2015" name="Proc. Natl. Acad. Sci. U.S.A.">
        <title>Trichodesmium genome maintains abundant, widespread noncoding DNA in situ, despite oligotrophic lifestyle.</title>
        <authorList>
            <person name="Walworth N."/>
            <person name="Pfreundt U."/>
            <person name="Nelson W.C."/>
            <person name="Mincer T."/>
            <person name="Heidelberg J.F."/>
            <person name="Fu F."/>
            <person name="Waterbury J.B."/>
            <person name="Glavina del Rio T."/>
            <person name="Goodwin L."/>
            <person name="Kyrpides N.C."/>
            <person name="Land M.L."/>
            <person name="Woyke T."/>
            <person name="Hutchins D.A."/>
            <person name="Hess W.R."/>
            <person name="Webb E.A."/>
        </authorList>
    </citation>
    <scope>NUCLEOTIDE SEQUENCE [LARGE SCALE GENOMIC DNA]</scope>
    <source>
        <strain>IMS101</strain>
    </source>
</reference>
<dbReference type="EC" id="3.1.-.-" evidence="1"/>
<dbReference type="EMBL" id="CP000393">
    <property type="protein sequence ID" value="ABG53939.1"/>
    <property type="molecule type" value="Genomic_DNA"/>
</dbReference>
<dbReference type="RefSeq" id="WP_011614233.1">
    <property type="nucleotide sequence ID" value="NC_008312.1"/>
</dbReference>
<dbReference type="SMR" id="Q10UY5"/>
<dbReference type="STRING" id="203124.Tery_5027"/>
<dbReference type="KEGG" id="ter:Tery_5027"/>
<dbReference type="eggNOG" id="COG0319">
    <property type="taxonomic scope" value="Bacteria"/>
</dbReference>
<dbReference type="HOGENOM" id="CLU_106710_3_0_3"/>
<dbReference type="OrthoDB" id="9807740at2"/>
<dbReference type="GO" id="GO:0005737">
    <property type="term" value="C:cytoplasm"/>
    <property type="evidence" value="ECO:0007669"/>
    <property type="project" value="UniProtKB-SubCell"/>
</dbReference>
<dbReference type="GO" id="GO:0004222">
    <property type="term" value="F:metalloendopeptidase activity"/>
    <property type="evidence" value="ECO:0007669"/>
    <property type="project" value="InterPro"/>
</dbReference>
<dbReference type="GO" id="GO:0004521">
    <property type="term" value="F:RNA endonuclease activity"/>
    <property type="evidence" value="ECO:0007669"/>
    <property type="project" value="UniProtKB-UniRule"/>
</dbReference>
<dbReference type="GO" id="GO:0008270">
    <property type="term" value="F:zinc ion binding"/>
    <property type="evidence" value="ECO:0007669"/>
    <property type="project" value="UniProtKB-UniRule"/>
</dbReference>
<dbReference type="GO" id="GO:0006364">
    <property type="term" value="P:rRNA processing"/>
    <property type="evidence" value="ECO:0007669"/>
    <property type="project" value="UniProtKB-UniRule"/>
</dbReference>
<dbReference type="Gene3D" id="3.40.390.30">
    <property type="entry name" value="Metalloproteases ('zincins'), catalytic domain"/>
    <property type="match status" value="1"/>
</dbReference>
<dbReference type="HAMAP" id="MF_00009">
    <property type="entry name" value="Endoribonucl_YbeY"/>
    <property type="match status" value="1"/>
</dbReference>
<dbReference type="InterPro" id="IPR023091">
    <property type="entry name" value="MetalPrtase_cat_dom_sf_prd"/>
</dbReference>
<dbReference type="InterPro" id="IPR002036">
    <property type="entry name" value="YbeY"/>
</dbReference>
<dbReference type="InterPro" id="IPR020549">
    <property type="entry name" value="YbeY_CS"/>
</dbReference>
<dbReference type="NCBIfam" id="TIGR00043">
    <property type="entry name" value="rRNA maturation RNase YbeY"/>
    <property type="match status" value="1"/>
</dbReference>
<dbReference type="PANTHER" id="PTHR46986">
    <property type="entry name" value="ENDORIBONUCLEASE YBEY, CHLOROPLASTIC"/>
    <property type="match status" value="1"/>
</dbReference>
<dbReference type="PANTHER" id="PTHR46986:SF1">
    <property type="entry name" value="ENDORIBONUCLEASE YBEY, CHLOROPLASTIC"/>
    <property type="match status" value="1"/>
</dbReference>
<dbReference type="Pfam" id="PF02130">
    <property type="entry name" value="YbeY"/>
    <property type="match status" value="1"/>
</dbReference>
<dbReference type="SUPFAM" id="SSF55486">
    <property type="entry name" value="Metalloproteases ('zincins'), catalytic domain"/>
    <property type="match status" value="1"/>
</dbReference>
<dbReference type="PROSITE" id="PS01306">
    <property type="entry name" value="UPF0054"/>
    <property type="match status" value="1"/>
</dbReference>
<keyword id="KW-0963">Cytoplasm</keyword>
<keyword id="KW-0255">Endonuclease</keyword>
<keyword id="KW-0378">Hydrolase</keyword>
<keyword id="KW-0479">Metal-binding</keyword>
<keyword id="KW-0540">Nuclease</keyword>
<keyword id="KW-0690">Ribosome biogenesis</keyword>
<keyword id="KW-0698">rRNA processing</keyword>
<keyword id="KW-0862">Zinc</keyword>